<name>DNLJ_AGRFC</name>
<comment type="function">
    <text evidence="1">DNA ligase that catalyzes the formation of phosphodiester linkages between 5'-phosphoryl and 3'-hydroxyl groups in double-stranded DNA using NAD as a coenzyme and as the energy source for the reaction. It is essential for DNA replication and repair of damaged DNA.</text>
</comment>
<comment type="catalytic activity">
    <reaction evidence="1">
        <text>NAD(+) + (deoxyribonucleotide)n-3'-hydroxyl + 5'-phospho-(deoxyribonucleotide)m = (deoxyribonucleotide)n+m + AMP + beta-nicotinamide D-nucleotide.</text>
        <dbReference type="EC" id="6.5.1.2"/>
    </reaction>
</comment>
<comment type="cofactor">
    <cofactor evidence="1">
        <name>Mg(2+)</name>
        <dbReference type="ChEBI" id="CHEBI:18420"/>
    </cofactor>
    <cofactor evidence="1">
        <name>Mn(2+)</name>
        <dbReference type="ChEBI" id="CHEBI:29035"/>
    </cofactor>
</comment>
<comment type="similarity">
    <text evidence="1">Belongs to the NAD-dependent DNA ligase family. LigA subfamily.</text>
</comment>
<accession>A9CIB3</accession>
<sequence>MSKDQIPVENLTELEASSELAFLAAELARHDALYHGKDAPEISDADYDALKRRNDAIEAAFPALVRADSPSKKVGFTPLPTFAPIVHARPMLSLDNTFSEEDLRDFVSSVYRFLGHLPDDSIAFTAEPKIDGLSMSIRYENRKLKTAATRGDGTTGENVTANIRTIKEIPNELPADAPDVVEVRGEVYMAKSDFLALNAQMEADGKQTYVNPRNTASGSLRQLDANVTAKRKLRFFAYALGEVSNGGQPARIADTQYGIVEKFREWGFPVNPLMKRFTSAQQLLEHYNEIGVARPDLDYDIDGVVYKVDRLDLQERLGFRSRSPRWATAHKFPAEQAFTTVENIEIQVGRTGALTPVARLTPITVGGVVVTNATLHNADYIEGIGNSGERIRPEDHDIRIGDTVIVQRAGDVIPQVLDVLLEKRAAGAAKYVFPEKCPVCGSHAVRERNEKTGKLDSVTRCTGGFVCRAQAVEHLKHFVSRNAFDIEGLGTKQIDFFFESDDPALSIKTAPDIFTLKARQEASHLTKLENIDGFGKVSVKKLFDAIDARRAIDLHRLIFALGIRHVGETTAKLLARSYGTYEHFEKAMKAAADPASDAWAELNSIDGIGEVVARAIIEFYKEPRNLDVIDRLIRELQPKEAEKPSTEGSPVAGKTVVFTGSLEKFTRDEAKARAESLGAKVAGSVSKKTDILVAGPGAGSKLAKATELGVQTMDEDEWLALIGG</sequence>
<proteinExistence type="inferred from homology"/>
<gene>
    <name evidence="1" type="primary">ligA</name>
    <name type="ordered locus">Atu2082</name>
    <name type="ORF">AGR_C_3775</name>
</gene>
<evidence type="ECO:0000255" key="1">
    <source>
        <dbReference type="HAMAP-Rule" id="MF_01588"/>
    </source>
</evidence>
<organism>
    <name type="scientific">Agrobacterium fabrum (strain C58 / ATCC 33970)</name>
    <name type="common">Agrobacterium tumefaciens (strain C58)</name>
    <dbReference type="NCBI Taxonomy" id="176299"/>
    <lineage>
        <taxon>Bacteria</taxon>
        <taxon>Pseudomonadati</taxon>
        <taxon>Pseudomonadota</taxon>
        <taxon>Alphaproteobacteria</taxon>
        <taxon>Hyphomicrobiales</taxon>
        <taxon>Rhizobiaceae</taxon>
        <taxon>Rhizobium/Agrobacterium group</taxon>
        <taxon>Agrobacterium</taxon>
        <taxon>Agrobacterium tumefaciens complex</taxon>
    </lineage>
</organism>
<dbReference type="EC" id="6.5.1.2" evidence="1"/>
<dbReference type="EMBL" id="AE007869">
    <property type="protein sequence ID" value="AAK87832.1"/>
    <property type="molecule type" value="Genomic_DNA"/>
</dbReference>
<dbReference type="PIR" id="AC2832">
    <property type="entry name" value="AC2832"/>
</dbReference>
<dbReference type="PIR" id="G97609">
    <property type="entry name" value="G97609"/>
</dbReference>
<dbReference type="RefSeq" id="NP_355047.1">
    <property type="nucleotide sequence ID" value="NC_003062.2"/>
</dbReference>
<dbReference type="RefSeq" id="WP_010972042.1">
    <property type="nucleotide sequence ID" value="NC_003062.2"/>
</dbReference>
<dbReference type="SMR" id="A9CIB3"/>
<dbReference type="STRING" id="176299.Atu2082"/>
<dbReference type="EnsemblBacteria" id="AAK87832">
    <property type="protein sequence ID" value="AAK87832"/>
    <property type="gene ID" value="Atu2082"/>
</dbReference>
<dbReference type="GeneID" id="1134120"/>
<dbReference type="KEGG" id="atu:Atu2082"/>
<dbReference type="PATRIC" id="fig|176299.10.peg.2095"/>
<dbReference type="eggNOG" id="COG0272">
    <property type="taxonomic scope" value="Bacteria"/>
</dbReference>
<dbReference type="HOGENOM" id="CLU_007764_2_0_5"/>
<dbReference type="OrthoDB" id="9759736at2"/>
<dbReference type="PhylomeDB" id="A9CIB3"/>
<dbReference type="BioCyc" id="AGRO:ATU2082-MONOMER"/>
<dbReference type="Proteomes" id="UP000000813">
    <property type="component" value="Chromosome circular"/>
</dbReference>
<dbReference type="GO" id="GO:0005829">
    <property type="term" value="C:cytosol"/>
    <property type="evidence" value="ECO:0007669"/>
    <property type="project" value="TreeGrafter"/>
</dbReference>
<dbReference type="GO" id="GO:0003677">
    <property type="term" value="F:DNA binding"/>
    <property type="evidence" value="ECO:0007669"/>
    <property type="project" value="InterPro"/>
</dbReference>
<dbReference type="GO" id="GO:0003911">
    <property type="term" value="F:DNA ligase (NAD+) activity"/>
    <property type="evidence" value="ECO:0007669"/>
    <property type="project" value="UniProtKB-UniRule"/>
</dbReference>
<dbReference type="GO" id="GO:0046872">
    <property type="term" value="F:metal ion binding"/>
    <property type="evidence" value="ECO:0007669"/>
    <property type="project" value="UniProtKB-KW"/>
</dbReference>
<dbReference type="GO" id="GO:0006281">
    <property type="term" value="P:DNA repair"/>
    <property type="evidence" value="ECO:0007669"/>
    <property type="project" value="UniProtKB-KW"/>
</dbReference>
<dbReference type="GO" id="GO:0006260">
    <property type="term" value="P:DNA replication"/>
    <property type="evidence" value="ECO:0007669"/>
    <property type="project" value="UniProtKB-KW"/>
</dbReference>
<dbReference type="CDD" id="cd17748">
    <property type="entry name" value="BRCT_DNA_ligase_like"/>
    <property type="match status" value="1"/>
</dbReference>
<dbReference type="CDD" id="cd00114">
    <property type="entry name" value="LIGANc"/>
    <property type="match status" value="1"/>
</dbReference>
<dbReference type="FunFam" id="3.30.470.30:FF:000001">
    <property type="entry name" value="DNA ligase"/>
    <property type="match status" value="1"/>
</dbReference>
<dbReference type="Gene3D" id="6.20.10.30">
    <property type="match status" value="1"/>
</dbReference>
<dbReference type="Gene3D" id="1.10.150.20">
    <property type="entry name" value="5' to 3' exonuclease, C-terminal subdomain"/>
    <property type="match status" value="2"/>
</dbReference>
<dbReference type="Gene3D" id="3.40.50.10190">
    <property type="entry name" value="BRCT domain"/>
    <property type="match status" value="1"/>
</dbReference>
<dbReference type="Gene3D" id="3.30.470.30">
    <property type="entry name" value="DNA ligase/mRNA capping enzyme"/>
    <property type="match status" value="1"/>
</dbReference>
<dbReference type="Gene3D" id="1.10.287.610">
    <property type="entry name" value="Helix hairpin bin"/>
    <property type="match status" value="1"/>
</dbReference>
<dbReference type="Gene3D" id="2.40.50.140">
    <property type="entry name" value="Nucleic acid-binding proteins"/>
    <property type="match status" value="1"/>
</dbReference>
<dbReference type="HAMAP" id="MF_01588">
    <property type="entry name" value="DNA_ligase_A"/>
    <property type="match status" value="1"/>
</dbReference>
<dbReference type="InterPro" id="IPR001357">
    <property type="entry name" value="BRCT_dom"/>
</dbReference>
<dbReference type="InterPro" id="IPR036420">
    <property type="entry name" value="BRCT_dom_sf"/>
</dbReference>
<dbReference type="InterPro" id="IPR041663">
    <property type="entry name" value="DisA/LigA_HHH"/>
</dbReference>
<dbReference type="InterPro" id="IPR001679">
    <property type="entry name" value="DNA_ligase"/>
</dbReference>
<dbReference type="InterPro" id="IPR018239">
    <property type="entry name" value="DNA_ligase_AS"/>
</dbReference>
<dbReference type="InterPro" id="IPR033136">
    <property type="entry name" value="DNA_ligase_CS"/>
</dbReference>
<dbReference type="InterPro" id="IPR013839">
    <property type="entry name" value="DNAligase_adenylation"/>
</dbReference>
<dbReference type="InterPro" id="IPR013840">
    <property type="entry name" value="DNAligase_N"/>
</dbReference>
<dbReference type="InterPro" id="IPR003583">
    <property type="entry name" value="Hlx-hairpin-Hlx_DNA-bd_motif"/>
</dbReference>
<dbReference type="InterPro" id="IPR012340">
    <property type="entry name" value="NA-bd_OB-fold"/>
</dbReference>
<dbReference type="InterPro" id="IPR004150">
    <property type="entry name" value="NAD_DNA_ligase_OB"/>
</dbReference>
<dbReference type="InterPro" id="IPR010994">
    <property type="entry name" value="RuvA_2-like"/>
</dbReference>
<dbReference type="InterPro" id="IPR004149">
    <property type="entry name" value="Znf_DNAligase_C4"/>
</dbReference>
<dbReference type="NCBIfam" id="TIGR00575">
    <property type="entry name" value="dnlj"/>
    <property type="match status" value="1"/>
</dbReference>
<dbReference type="NCBIfam" id="NF005932">
    <property type="entry name" value="PRK07956.1"/>
    <property type="match status" value="1"/>
</dbReference>
<dbReference type="PANTHER" id="PTHR23389">
    <property type="entry name" value="CHROMOSOME TRANSMISSION FIDELITY FACTOR 18"/>
    <property type="match status" value="1"/>
</dbReference>
<dbReference type="PANTHER" id="PTHR23389:SF9">
    <property type="entry name" value="DNA LIGASE"/>
    <property type="match status" value="1"/>
</dbReference>
<dbReference type="Pfam" id="PF00533">
    <property type="entry name" value="BRCT"/>
    <property type="match status" value="1"/>
</dbReference>
<dbReference type="Pfam" id="PF01653">
    <property type="entry name" value="DNA_ligase_aden"/>
    <property type="match status" value="1"/>
</dbReference>
<dbReference type="Pfam" id="PF03120">
    <property type="entry name" value="DNA_ligase_OB"/>
    <property type="match status" value="1"/>
</dbReference>
<dbReference type="Pfam" id="PF03119">
    <property type="entry name" value="DNA_ligase_ZBD"/>
    <property type="match status" value="1"/>
</dbReference>
<dbReference type="Pfam" id="PF12826">
    <property type="entry name" value="HHH_2"/>
    <property type="match status" value="1"/>
</dbReference>
<dbReference type="PIRSF" id="PIRSF001604">
    <property type="entry name" value="LigA"/>
    <property type="match status" value="1"/>
</dbReference>
<dbReference type="SMART" id="SM00292">
    <property type="entry name" value="BRCT"/>
    <property type="match status" value="1"/>
</dbReference>
<dbReference type="SMART" id="SM00278">
    <property type="entry name" value="HhH1"/>
    <property type="match status" value="3"/>
</dbReference>
<dbReference type="SMART" id="SM00532">
    <property type="entry name" value="LIGANc"/>
    <property type="match status" value="1"/>
</dbReference>
<dbReference type="SUPFAM" id="SSF52113">
    <property type="entry name" value="BRCT domain"/>
    <property type="match status" value="1"/>
</dbReference>
<dbReference type="SUPFAM" id="SSF56091">
    <property type="entry name" value="DNA ligase/mRNA capping enzyme, catalytic domain"/>
    <property type="match status" value="1"/>
</dbReference>
<dbReference type="SUPFAM" id="SSF50249">
    <property type="entry name" value="Nucleic acid-binding proteins"/>
    <property type="match status" value="1"/>
</dbReference>
<dbReference type="SUPFAM" id="SSF47781">
    <property type="entry name" value="RuvA domain 2-like"/>
    <property type="match status" value="1"/>
</dbReference>
<dbReference type="PROSITE" id="PS50172">
    <property type="entry name" value="BRCT"/>
    <property type="match status" value="1"/>
</dbReference>
<dbReference type="PROSITE" id="PS01055">
    <property type="entry name" value="DNA_LIGASE_N1"/>
    <property type="match status" value="1"/>
</dbReference>
<dbReference type="PROSITE" id="PS01056">
    <property type="entry name" value="DNA_LIGASE_N2"/>
    <property type="match status" value="1"/>
</dbReference>
<protein>
    <recommendedName>
        <fullName evidence="1">DNA ligase</fullName>
        <ecNumber evidence="1">6.5.1.2</ecNumber>
    </recommendedName>
    <alternativeName>
        <fullName evidence="1">Polydeoxyribonucleotide synthase [NAD(+)]</fullName>
    </alternativeName>
</protein>
<keyword id="KW-0227">DNA damage</keyword>
<keyword id="KW-0234">DNA repair</keyword>
<keyword id="KW-0235">DNA replication</keyword>
<keyword id="KW-0436">Ligase</keyword>
<keyword id="KW-0460">Magnesium</keyword>
<keyword id="KW-0464">Manganese</keyword>
<keyword id="KW-0479">Metal-binding</keyword>
<keyword id="KW-0520">NAD</keyword>
<keyword id="KW-1185">Reference proteome</keyword>
<keyword id="KW-0862">Zinc</keyword>
<feature type="chain" id="PRO_0000313106" description="DNA ligase">
    <location>
        <begin position="1"/>
        <end position="724"/>
    </location>
</feature>
<feature type="domain" description="BRCT" evidence="1">
    <location>
        <begin position="646"/>
        <end position="724"/>
    </location>
</feature>
<feature type="active site" description="N6-AMP-lysine intermediate" evidence="1">
    <location>
        <position position="129"/>
    </location>
</feature>
<feature type="binding site" evidence="1">
    <location>
        <begin position="44"/>
        <end position="48"/>
    </location>
    <ligand>
        <name>NAD(+)</name>
        <dbReference type="ChEBI" id="CHEBI:57540"/>
    </ligand>
</feature>
<feature type="binding site" evidence="1">
    <location>
        <begin position="93"/>
        <end position="94"/>
    </location>
    <ligand>
        <name>NAD(+)</name>
        <dbReference type="ChEBI" id="CHEBI:57540"/>
    </ligand>
</feature>
<feature type="binding site" evidence="1">
    <location>
        <position position="127"/>
    </location>
    <ligand>
        <name>NAD(+)</name>
        <dbReference type="ChEBI" id="CHEBI:57540"/>
    </ligand>
</feature>
<feature type="binding site" evidence="1">
    <location>
        <position position="150"/>
    </location>
    <ligand>
        <name>NAD(+)</name>
        <dbReference type="ChEBI" id="CHEBI:57540"/>
    </ligand>
</feature>
<feature type="binding site" evidence="1">
    <location>
        <position position="186"/>
    </location>
    <ligand>
        <name>NAD(+)</name>
        <dbReference type="ChEBI" id="CHEBI:57540"/>
    </ligand>
</feature>
<feature type="binding site" evidence="1">
    <location>
        <position position="307"/>
    </location>
    <ligand>
        <name>NAD(+)</name>
        <dbReference type="ChEBI" id="CHEBI:57540"/>
    </ligand>
</feature>
<feature type="binding site" evidence="1">
    <location>
        <position position="331"/>
    </location>
    <ligand>
        <name>NAD(+)</name>
        <dbReference type="ChEBI" id="CHEBI:57540"/>
    </ligand>
</feature>
<feature type="binding site" evidence="1">
    <location>
        <position position="437"/>
    </location>
    <ligand>
        <name>Zn(2+)</name>
        <dbReference type="ChEBI" id="CHEBI:29105"/>
    </ligand>
</feature>
<feature type="binding site" evidence="1">
    <location>
        <position position="440"/>
    </location>
    <ligand>
        <name>Zn(2+)</name>
        <dbReference type="ChEBI" id="CHEBI:29105"/>
    </ligand>
</feature>
<feature type="binding site" evidence="1">
    <location>
        <position position="461"/>
    </location>
    <ligand>
        <name>Zn(2+)</name>
        <dbReference type="ChEBI" id="CHEBI:29105"/>
    </ligand>
</feature>
<feature type="binding site" evidence="1">
    <location>
        <position position="467"/>
    </location>
    <ligand>
        <name>Zn(2+)</name>
        <dbReference type="ChEBI" id="CHEBI:29105"/>
    </ligand>
</feature>
<reference key="1">
    <citation type="journal article" date="2001" name="Science">
        <title>The genome of the natural genetic engineer Agrobacterium tumefaciens C58.</title>
        <authorList>
            <person name="Wood D.W."/>
            <person name="Setubal J.C."/>
            <person name="Kaul R."/>
            <person name="Monks D.E."/>
            <person name="Kitajima J.P."/>
            <person name="Okura V.K."/>
            <person name="Zhou Y."/>
            <person name="Chen L."/>
            <person name="Wood G.E."/>
            <person name="Almeida N.F. Jr."/>
            <person name="Woo L."/>
            <person name="Chen Y."/>
            <person name="Paulsen I.T."/>
            <person name="Eisen J.A."/>
            <person name="Karp P.D."/>
            <person name="Bovee D. Sr."/>
            <person name="Chapman P."/>
            <person name="Clendenning J."/>
            <person name="Deatherage G."/>
            <person name="Gillet W."/>
            <person name="Grant C."/>
            <person name="Kutyavin T."/>
            <person name="Levy R."/>
            <person name="Li M.-J."/>
            <person name="McClelland E."/>
            <person name="Palmieri A."/>
            <person name="Raymond C."/>
            <person name="Rouse G."/>
            <person name="Saenphimmachak C."/>
            <person name="Wu Z."/>
            <person name="Romero P."/>
            <person name="Gordon D."/>
            <person name="Zhang S."/>
            <person name="Yoo H."/>
            <person name="Tao Y."/>
            <person name="Biddle P."/>
            <person name="Jung M."/>
            <person name="Krespan W."/>
            <person name="Perry M."/>
            <person name="Gordon-Kamm B."/>
            <person name="Liao L."/>
            <person name="Kim S."/>
            <person name="Hendrick C."/>
            <person name="Zhao Z.-Y."/>
            <person name="Dolan M."/>
            <person name="Chumley F."/>
            <person name="Tingey S.V."/>
            <person name="Tomb J.-F."/>
            <person name="Gordon M.P."/>
            <person name="Olson M.V."/>
            <person name="Nester E.W."/>
        </authorList>
    </citation>
    <scope>NUCLEOTIDE SEQUENCE [LARGE SCALE GENOMIC DNA]</scope>
    <source>
        <strain>C58 / ATCC 33970</strain>
    </source>
</reference>
<reference key="2">
    <citation type="journal article" date="2001" name="Science">
        <title>Genome sequence of the plant pathogen and biotechnology agent Agrobacterium tumefaciens C58.</title>
        <authorList>
            <person name="Goodner B."/>
            <person name="Hinkle G."/>
            <person name="Gattung S."/>
            <person name="Miller N."/>
            <person name="Blanchard M."/>
            <person name="Qurollo B."/>
            <person name="Goldman B.S."/>
            <person name="Cao Y."/>
            <person name="Askenazi M."/>
            <person name="Halling C."/>
            <person name="Mullin L."/>
            <person name="Houmiel K."/>
            <person name="Gordon J."/>
            <person name="Vaudin M."/>
            <person name="Iartchouk O."/>
            <person name="Epp A."/>
            <person name="Liu F."/>
            <person name="Wollam C."/>
            <person name="Allinger M."/>
            <person name="Doughty D."/>
            <person name="Scott C."/>
            <person name="Lappas C."/>
            <person name="Markelz B."/>
            <person name="Flanagan C."/>
            <person name="Crowell C."/>
            <person name="Gurson J."/>
            <person name="Lomo C."/>
            <person name="Sear C."/>
            <person name="Strub G."/>
            <person name="Cielo C."/>
            <person name="Slater S."/>
        </authorList>
    </citation>
    <scope>NUCLEOTIDE SEQUENCE [LARGE SCALE GENOMIC DNA]</scope>
    <source>
        <strain>C58 / ATCC 33970</strain>
    </source>
</reference>